<organism>
    <name type="scientific">Canis lupus familiaris</name>
    <name type="common">Dog</name>
    <name type="synonym">Canis familiaris</name>
    <dbReference type="NCBI Taxonomy" id="9615"/>
    <lineage>
        <taxon>Eukaryota</taxon>
        <taxon>Metazoa</taxon>
        <taxon>Chordata</taxon>
        <taxon>Craniata</taxon>
        <taxon>Vertebrata</taxon>
        <taxon>Euteleostomi</taxon>
        <taxon>Mammalia</taxon>
        <taxon>Eutheria</taxon>
        <taxon>Laurasiatheria</taxon>
        <taxon>Carnivora</taxon>
        <taxon>Caniformia</taxon>
        <taxon>Canidae</taxon>
        <taxon>Canis</taxon>
    </lineage>
</organism>
<accession>Q9XS65</accession>
<keyword id="KW-0963">Cytoplasm</keyword>
<keyword id="KW-1015">Disulfide bond</keyword>
<keyword id="KW-0256">Endoplasmic reticulum</keyword>
<keyword id="KW-0275">Fatty acid biosynthesis</keyword>
<keyword id="KW-0276">Fatty acid metabolism</keyword>
<keyword id="KW-0325">Glycoprotein</keyword>
<keyword id="KW-0333">Golgi apparatus</keyword>
<keyword id="KW-0413">Isomerase</keyword>
<keyword id="KW-0444">Lipid biosynthesis</keyword>
<keyword id="KW-0443">Lipid metabolism</keyword>
<keyword id="KW-0467">Mast cell degranulation</keyword>
<keyword id="KW-0472">Membrane</keyword>
<keyword id="KW-0539">Nucleus</keyword>
<keyword id="KW-0643">Prostaglandin biosynthesis</keyword>
<keyword id="KW-0644">Prostaglandin metabolism</keyword>
<keyword id="KW-0873">Pyrrolidone carboxylic acid</keyword>
<keyword id="KW-1185">Reference proteome</keyword>
<keyword id="KW-0964">Secreted</keyword>
<keyword id="KW-0732">Signal</keyword>
<keyword id="KW-0813">Transport</keyword>
<evidence type="ECO:0000250" key="1"/>
<evidence type="ECO:0000250" key="2">
    <source>
        <dbReference type="UniProtKB" id="O09114"/>
    </source>
</evidence>
<evidence type="ECO:0000250" key="3">
    <source>
        <dbReference type="UniProtKB" id="P22057"/>
    </source>
</evidence>
<evidence type="ECO:0000250" key="4">
    <source>
        <dbReference type="UniProtKB" id="P41222"/>
    </source>
</evidence>
<evidence type="ECO:0000269" key="5">
    <source ref="1"/>
</evidence>
<evidence type="ECO:0000305" key="6"/>
<protein>
    <recommendedName>
        <fullName>Prostaglandin-H2 D-isomerase</fullName>
        <ecNumber evidence="4">5.3.99.2</ecNumber>
    </recommendedName>
    <alternativeName>
        <fullName>Glutathione-independent PGD synthase</fullName>
    </alternativeName>
    <alternativeName>
        <fullName>Lipocalin-type prostaglandin-D synthase</fullName>
    </alternativeName>
    <alternativeName>
        <fullName>Prostaglandin-D2 synthase</fullName>
        <shortName>PGD2 synthase</shortName>
        <shortName>PGDS</shortName>
        <shortName>PGDS2</shortName>
    </alternativeName>
</protein>
<comment type="function">
    <text evidence="1 2 4">Catalyzes the conversion of PGH2 to PGD2, a prostaglandin involved in smooth muscle contraction/relaxation and a potent inhibitor of platelet aggregation. Involved in a variety of CNS functions, such as sedation, NREM sleep and PGE2-induced allodynia, and may have an anti-apoptotic role in oligodendrocytes. Binds small non-substrate lipophilic molecules, including biliverdin, bilirubin, retinal, retinoic acid and thyroid hormone, and may act as a scavenger for harmful hydrophobic molecules and as a secretory retinoid and thyroid hormone transporter. Possibly involved in development and maintenance of the blood-brain, blood-retina, blood-aqueous humor and blood-testis barrier. It is likely to play important roles in both maturation and maintenance of the central nervous system and male reproductive system (By similarity). Involved in PLA2G3-dependent maturation of mast cells. PLA2G3 is secreted by immature mast cells and acts on nearby fibroblasts upstream to PTDGS to synthesize PGD2, which in turn promotes mast cell maturation and degranulation via PTGDR (By similarity).</text>
</comment>
<comment type="catalytic activity">
    <reaction evidence="4">
        <text>prostaglandin H2 = prostaglandin D2</text>
        <dbReference type="Rhea" id="RHEA:10600"/>
        <dbReference type="ChEBI" id="CHEBI:57405"/>
        <dbReference type="ChEBI" id="CHEBI:57406"/>
        <dbReference type="EC" id="5.3.99.2"/>
    </reaction>
</comment>
<comment type="subunit">
    <text evidence="4">Monomer.</text>
</comment>
<comment type="subcellular location">
    <subcellularLocation>
        <location evidence="4">Rough endoplasmic reticulum</location>
    </subcellularLocation>
    <subcellularLocation>
        <location evidence="4">Nucleus membrane</location>
    </subcellularLocation>
    <subcellularLocation>
        <location evidence="4">Golgi apparatus</location>
    </subcellularLocation>
    <subcellularLocation>
        <location evidence="4">Cytoplasm</location>
        <location evidence="4">Perinuclear region</location>
    </subcellularLocation>
    <subcellularLocation>
        <location evidence="4">Secreted</location>
    </subcellularLocation>
    <text evidence="4">Detected on rough endoplasmic reticulum of arachnoid and menigioma cells. Localized to the nuclear envelope, Golgi apparatus, secretory vesicles and spherical cytoplasmic structures in arachnoid trabecular cells, and to circular cytoplasmic structures in meningeal macrophages and perivascular microglial cells. In oligodendrocytes, localized to the rough endoplasmic reticulum and nuclear envelope. In retinal pigment epithelial cells, localized to distinct cytoplasmic domains including the perinuclear region. Also secreted.</text>
</comment>
<comment type="domain">
    <text evidence="4">Forms a beta-barrel structure that accommodates hydrophobic ligands in its interior.</text>
</comment>
<comment type="PTM">
    <text evidence="4">N- and O-glycosylated. Both N-glycosylation recognition sites are almost quantitatively occupied by N-glycans of the biantennary complex type, with a considerable proportion of structures bearing a bisecting GlcNAc. N-glycan at Asn-78: dHex1Hex5HexNAc4. Agalacto structure as well as sialylated and nonsialylated oligosaccharides bearing alpha2-3- and/or alpha2-6-linked NeuNAc are present.</text>
</comment>
<comment type="similarity">
    <text evidence="6">Belongs to the calycin superfamily. Lipocalin family.</text>
</comment>
<gene>
    <name type="primary">PTGDS</name>
</gene>
<dbReference type="EC" id="5.3.99.2" evidence="4"/>
<dbReference type="EMBL" id="AB026988">
    <property type="protein sequence ID" value="BAA77690.1"/>
    <property type="molecule type" value="mRNA"/>
</dbReference>
<dbReference type="RefSeq" id="NP_001003131.1">
    <property type="nucleotide sequence ID" value="NM_001003131.1"/>
</dbReference>
<dbReference type="SMR" id="Q9XS65"/>
<dbReference type="FunCoup" id="Q9XS65">
    <property type="interactions" value="9"/>
</dbReference>
<dbReference type="STRING" id="9615.ENSCAFP00000046976"/>
<dbReference type="GlyCosmos" id="Q9XS65">
    <property type="glycosylation" value="2 sites, No reported glycans"/>
</dbReference>
<dbReference type="PaxDb" id="9612-ENSCAFP00000043090"/>
<dbReference type="GeneID" id="403740"/>
<dbReference type="KEGG" id="cfa:403740"/>
<dbReference type="CTD" id="5730"/>
<dbReference type="eggNOG" id="ENOG502S6GK">
    <property type="taxonomic scope" value="Eukaryota"/>
</dbReference>
<dbReference type="HOGENOM" id="CLU_094061_1_1_1"/>
<dbReference type="InParanoid" id="Q9XS65"/>
<dbReference type="OrthoDB" id="9849at33554"/>
<dbReference type="Proteomes" id="UP000002254">
    <property type="component" value="Unplaced"/>
</dbReference>
<dbReference type="Proteomes" id="UP000694429">
    <property type="component" value="Unplaced"/>
</dbReference>
<dbReference type="Proteomes" id="UP000694542">
    <property type="component" value="Unplaced"/>
</dbReference>
<dbReference type="Proteomes" id="UP000805418">
    <property type="component" value="Unplaced"/>
</dbReference>
<dbReference type="GO" id="GO:0005576">
    <property type="term" value="C:extracellular region"/>
    <property type="evidence" value="ECO:0000250"/>
    <property type="project" value="UniProtKB"/>
</dbReference>
<dbReference type="GO" id="GO:0005615">
    <property type="term" value="C:extracellular space"/>
    <property type="evidence" value="ECO:0000250"/>
    <property type="project" value="UniProtKB"/>
</dbReference>
<dbReference type="GO" id="GO:0005794">
    <property type="term" value="C:Golgi apparatus"/>
    <property type="evidence" value="ECO:0000250"/>
    <property type="project" value="UniProtKB"/>
</dbReference>
<dbReference type="GO" id="GO:0031965">
    <property type="term" value="C:nuclear membrane"/>
    <property type="evidence" value="ECO:0007669"/>
    <property type="project" value="UniProtKB-SubCell"/>
</dbReference>
<dbReference type="GO" id="GO:0048471">
    <property type="term" value="C:perinuclear region of cytoplasm"/>
    <property type="evidence" value="ECO:0007669"/>
    <property type="project" value="UniProtKB-SubCell"/>
</dbReference>
<dbReference type="GO" id="GO:0005791">
    <property type="term" value="C:rough endoplasmic reticulum"/>
    <property type="evidence" value="ECO:0000250"/>
    <property type="project" value="UniProtKB"/>
</dbReference>
<dbReference type="GO" id="GO:0004667">
    <property type="term" value="F:prostaglandin-D synthase activity"/>
    <property type="evidence" value="ECO:0000250"/>
    <property type="project" value="UniProtKB"/>
</dbReference>
<dbReference type="GO" id="GO:0005501">
    <property type="term" value="F:retinoid binding"/>
    <property type="evidence" value="ECO:0000250"/>
    <property type="project" value="UniProtKB"/>
</dbReference>
<dbReference type="GO" id="GO:0036094">
    <property type="term" value="F:small molecule binding"/>
    <property type="evidence" value="ECO:0007669"/>
    <property type="project" value="InterPro"/>
</dbReference>
<dbReference type="GO" id="GO:0043303">
    <property type="term" value="P:mast cell degranulation"/>
    <property type="evidence" value="ECO:0007669"/>
    <property type="project" value="UniProtKB-KW"/>
</dbReference>
<dbReference type="GO" id="GO:0001516">
    <property type="term" value="P:prostaglandin biosynthetic process"/>
    <property type="evidence" value="ECO:0000250"/>
    <property type="project" value="UniProtKB"/>
</dbReference>
<dbReference type="GO" id="GO:0045187">
    <property type="term" value="P:regulation of circadian sleep/wake cycle, sleep"/>
    <property type="evidence" value="ECO:0000250"/>
    <property type="project" value="UniProtKB"/>
</dbReference>
<dbReference type="CDD" id="cd19419">
    <property type="entry name" value="lipocalin_L-PGDS"/>
    <property type="match status" value="1"/>
</dbReference>
<dbReference type="FunFam" id="2.40.128.20:FF:000010">
    <property type="entry name" value="Prostaglandin-H2 D-isomerase"/>
    <property type="match status" value="1"/>
</dbReference>
<dbReference type="Gene3D" id="2.40.128.20">
    <property type="match status" value="1"/>
</dbReference>
<dbReference type="InterPro" id="IPR012674">
    <property type="entry name" value="Calycin"/>
</dbReference>
<dbReference type="InterPro" id="IPR002345">
    <property type="entry name" value="Lipocalin"/>
</dbReference>
<dbReference type="InterPro" id="IPR000566">
    <property type="entry name" value="Lipocln_cytosolic_FA-bd_dom"/>
</dbReference>
<dbReference type="PANTHER" id="PTHR11430">
    <property type="entry name" value="LIPOCALIN"/>
    <property type="match status" value="1"/>
</dbReference>
<dbReference type="PANTHER" id="PTHR11430:SF86">
    <property type="entry name" value="PROSTAGLANDIN-H2 D-ISOMERASE"/>
    <property type="match status" value="1"/>
</dbReference>
<dbReference type="Pfam" id="PF00061">
    <property type="entry name" value="Lipocalin"/>
    <property type="match status" value="1"/>
</dbReference>
<dbReference type="PRINTS" id="PR00179">
    <property type="entry name" value="LIPOCALIN"/>
</dbReference>
<dbReference type="PRINTS" id="PR01254">
    <property type="entry name" value="PGNDSYNTHASE"/>
</dbReference>
<dbReference type="SUPFAM" id="SSF50814">
    <property type="entry name" value="Lipocalins"/>
    <property type="match status" value="1"/>
</dbReference>
<sequence length="191" mass="21142">MGALCTLWLGLVLLGVLGALQTSAQAQVSLQPNFQQDKFLGRWFTSGLASNSSWFREKKNVLSMCMSVVAPTADGGLNLTSTFLRKDQCETRTLLLRPAGTPGCYSYTSPHWGSTHDVWVVATNYEEYALLYTAGSKGLGQDFHMATLYSRTQTPKAEIKEKFSTFAKTQGFTEDAIVFLPQTDKCMEENK</sequence>
<proteinExistence type="evidence at transcript level"/>
<reference key="1">
    <citation type="submission" date="1999-05" db="EMBL/GenBank/DDBJ databases">
        <title>Dog lipocalin-type prostaglandin D synthase cDNA.</title>
        <authorList>
            <person name="Nakau H."/>
            <person name="Nakajima H."/>
            <person name="Urade Y."/>
            <person name="Fujimori K."/>
            <person name="Oda H."/>
            <person name="Seiki K."/>
        </authorList>
    </citation>
    <scope>NUCLEOTIDE SEQUENCE [MRNA]</scope>
    <scope>VARIANT ARG-9</scope>
    <source>
        <tissue>Brain</tissue>
    </source>
</reference>
<name>PTGDS_CANLF</name>
<feature type="signal peptide" evidence="4">
    <location>
        <begin position="1"/>
        <end position="24"/>
    </location>
</feature>
<feature type="chain" id="PRO_0000017941" description="Prostaglandin-H2 D-isomerase">
    <location>
        <begin position="25"/>
        <end position="191"/>
    </location>
</feature>
<feature type="active site" description="Nucleophile" evidence="4">
    <location>
        <position position="65"/>
    </location>
</feature>
<feature type="modified residue" description="Pyrrolidone carboxylic acid" evidence="3">
    <location>
        <position position="25"/>
    </location>
</feature>
<feature type="glycosylation site" description="N-linked (GlcNAc...) asparagine" evidence="1">
    <location>
        <position position="51"/>
    </location>
</feature>
<feature type="glycosylation site" description="N-linked (GlcNAc...) asparagine" evidence="1">
    <location>
        <position position="78"/>
    </location>
</feature>
<feature type="disulfide bond" evidence="2">
    <location>
        <begin position="89"/>
        <end position="186"/>
    </location>
</feature>
<feature type="sequence variant" evidence="5">
    <original>L</original>
    <variation>R</variation>
    <location>
        <position position="9"/>
    </location>
</feature>